<accession>Q09897</accession>
<organism>
    <name type="scientific">Schizosaccharomyces pombe (strain 972 / ATCC 24843)</name>
    <name type="common">Fission yeast</name>
    <dbReference type="NCBI Taxonomy" id="284812"/>
    <lineage>
        <taxon>Eukaryota</taxon>
        <taxon>Fungi</taxon>
        <taxon>Dikarya</taxon>
        <taxon>Ascomycota</taxon>
        <taxon>Taphrinomycotina</taxon>
        <taxon>Schizosaccharomycetes</taxon>
        <taxon>Schizosaccharomycetales</taxon>
        <taxon>Schizosaccharomycetaceae</taxon>
        <taxon>Schizosaccharomyces</taxon>
    </lineage>
</organism>
<reference key="1">
    <citation type="journal article" date="2002" name="Nature">
        <title>The genome sequence of Schizosaccharomyces pombe.</title>
        <authorList>
            <person name="Wood V."/>
            <person name="Gwilliam R."/>
            <person name="Rajandream M.A."/>
            <person name="Lyne M.H."/>
            <person name="Lyne R."/>
            <person name="Stewart A."/>
            <person name="Sgouros J.G."/>
            <person name="Peat N."/>
            <person name="Hayles J."/>
            <person name="Baker S.G."/>
            <person name="Basham D."/>
            <person name="Bowman S."/>
            <person name="Brooks K."/>
            <person name="Brown D."/>
            <person name="Brown S."/>
            <person name="Chillingworth T."/>
            <person name="Churcher C.M."/>
            <person name="Collins M."/>
            <person name="Connor R."/>
            <person name="Cronin A."/>
            <person name="Davis P."/>
            <person name="Feltwell T."/>
            <person name="Fraser A."/>
            <person name="Gentles S."/>
            <person name="Goble A."/>
            <person name="Hamlin N."/>
            <person name="Harris D.E."/>
            <person name="Hidalgo J."/>
            <person name="Hodgson G."/>
            <person name="Holroyd S."/>
            <person name="Hornsby T."/>
            <person name="Howarth S."/>
            <person name="Huckle E.J."/>
            <person name="Hunt S."/>
            <person name="Jagels K."/>
            <person name="James K.D."/>
            <person name="Jones L."/>
            <person name="Jones M."/>
            <person name="Leather S."/>
            <person name="McDonald S."/>
            <person name="McLean J."/>
            <person name="Mooney P."/>
            <person name="Moule S."/>
            <person name="Mungall K.L."/>
            <person name="Murphy L.D."/>
            <person name="Niblett D."/>
            <person name="Odell C."/>
            <person name="Oliver K."/>
            <person name="O'Neil S."/>
            <person name="Pearson D."/>
            <person name="Quail M.A."/>
            <person name="Rabbinowitsch E."/>
            <person name="Rutherford K.M."/>
            <person name="Rutter S."/>
            <person name="Saunders D."/>
            <person name="Seeger K."/>
            <person name="Sharp S."/>
            <person name="Skelton J."/>
            <person name="Simmonds M.N."/>
            <person name="Squares R."/>
            <person name="Squares S."/>
            <person name="Stevens K."/>
            <person name="Taylor K."/>
            <person name="Taylor R.G."/>
            <person name="Tivey A."/>
            <person name="Walsh S.V."/>
            <person name="Warren T."/>
            <person name="Whitehead S."/>
            <person name="Woodward J.R."/>
            <person name="Volckaert G."/>
            <person name="Aert R."/>
            <person name="Robben J."/>
            <person name="Grymonprez B."/>
            <person name="Weltjens I."/>
            <person name="Vanstreels E."/>
            <person name="Rieger M."/>
            <person name="Schaefer M."/>
            <person name="Mueller-Auer S."/>
            <person name="Gabel C."/>
            <person name="Fuchs M."/>
            <person name="Duesterhoeft A."/>
            <person name="Fritzc C."/>
            <person name="Holzer E."/>
            <person name="Moestl D."/>
            <person name="Hilbert H."/>
            <person name="Borzym K."/>
            <person name="Langer I."/>
            <person name="Beck A."/>
            <person name="Lehrach H."/>
            <person name="Reinhardt R."/>
            <person name="Pohl T.M."/>
            <person name="Eger P."/>
            <person name="Zimmermann W."/>
            <person name="Wedler H."/>
            <person name="Wambutt R."/>
            <person name="Purnelle B."/>
            <person name="Goffeau A."/>
            <person name="Cadieu E."/>
            <person name="Dreano S."/>
            <person name="Gloux S."/>
            <person name="Lelaure V."/>
            <person name="Mottier S."/>
            <person name="Galibert F."/>
            <person name="Aves S.J."/>
            <person name="Xiang Z."/>
            <person name="Hunt C."/>
            <person name="Moore K."/>
            <person name="Hurst S.M."/>
            <person name="Lucas M."/>
            <person name="Rochet M."/>
            <person name="Gaillardin C."/>
            <person name="Tallada V.A."/>
            <person name="Garzon A."/>
            <person name="Thode G."/>
            <person name="Daga R.R."/>
            <person name="Cruzado L."/>
            <person name="Jimenez J."/>
            <person name="Sanchez M."/>
            <person name="del Rey F."/>
            <person name="Benito J."/>
            <person name="Dominguez A."/>
            <person name="Revuelta J.L."/>
            <person name="Moreno S."/>
            <person name="Armstrong J."/>
            <person name="Forsburg S.L."/>
            <person name="Cerutti L."/>
            <person name="Lowe T."/>
            <person name="McCombie W.R."/>
            <person name="Paulsen I."/>
            <person name="Potashkin J."/>
            <person name="Shpakovski G.V."/>
            <person name="Ussery D."/>
            <person name="Barrell B.G."/>
            <person name="Nurse P."/>
        </authorList>
    </citation>
    <scope>NUCLEOTIDE SEQUENCE [LARGE SCALE GENOMIC DNA]</scope>
    <source>
        <strain>972 / ATCC 24843</strain>
    </source>
</reference>
<reference key="2">
    <citation type="journal article" date="2004" name="Yeast">
        <title>Chr4, a Schizosaccharomyces pombe homologue of the Saccharomyces cerevisiae Chs4p/Skt5p protein, is related to septum formation and is required for the proper localization of Chs2.</title>
        <authorList>
            <person name="Matsuo Y."/>
            <person name="Matsuura Y."/>
            <person name="Tanaka K."/>
            <person name="Matsuda H."/>
            <person name="Kawamukai M."/>
        </authorList>
    </citation>
    <scope>IDENTIFICATION</scope>
    <scope>POSSIBLE FUNCTION</scope>
</reference>
<reference key="3">
    <citation type="journal article" date="2008" name="J. Proteome Res.">
        <title>Phosphoproteome analysis of fission yeast.</title>
        <authorList>
            <person name="Wilson-Grady J.T."/>
            <person name="Villen J."/>
            <person name="Gygi S.P."/>
        </authorList>
    </citation>
    <scope>PHOSPHORYLATION [LARGE SCALE ANALYSIS] AT SER-393</scope>
    <scope>IDENTIFICATION BY MASS SPECTROMETRY</scope>
</reference>
<keyword id="KW-0597">Phosphoprotein</keyword>
<keyword id="KW-1185">Reference proteome</keyword>
<keyword id="KW-0677">Repeat</keyword>
<sequence length="932" mass="103184">MKDSHSSRRKYEKEKLVFATNNGKRTEGTPAFLKSGNTASSSSPTLQFRPTSRYPTLSHEPVYTNVLDLSSRIDANRASIMSATMGTPPSALKFSKKKISRPVVSEDTFKDKLPRATIPVKPEPQPQYKIPAAPAPTSKRVVNRGLKLNTNLRQASPILPSPSLKLDRQDAPIQINHEQKEDFLVSIPRPTPMTNLDDGKDEIGQPDPHRKYMAPPRVNSISRVQRRMSYIPYGGFDDFLDNYYKDDDTVLEDNQLKSNSRIETLEEEDGAESDSITNTVSNASSDAEPAHRHLGPVYENSGHLPSKSHFSSTDSNTDSFGLESDERSLPSVSNDLKSSETLKNPRNDDLLTLQQPPRYPHSQMVMLPARSPVEVPAPTFDRRNVSRNSNNNSPEGYDNNRTNPTVNNLPSYPTNLARPKAIKPMPTSIHGQTSPLSPIPPVHTTHGLVSDIRPLPSVSSPIMRADSTPISHNLAVTPSFSPIPQQSNKSIGNHKNTSVANVSSKVANSKFERNISMMSNSNASSPAIFEVGAEAKEKTKDAIPCHPDDKLMIPSPKIVTHGDAMQEEQRLRQKSQITPDDEVELAKVYLNALETLENKPSLAPDQASYNTRINVYRTRAVELLKKNAYPSKTQNTVPEALFLIGQFHSQGVLGFRRDLGKAFELYSLAAKKGHPLSNYRVAVCLQTGTGVKPDTSKCVAIYKKAAEMDVVEAMFRIALIYLNGLLGQKRNISLGVQWLERACKSKGPESVRAMYELAKIYEQPDRYGVSATPERKFELYKQSAVYGYAAAQCKLGECYEHGLLGCLAEPRRSIFWYTRAAEQDYGEAELGLSGWYLTGSEGILPKNGEEALLWAHKAACKGLAKAQYAVGFMMEQGIGVAADPSSAHNWYIRAAKQGFPKAKKRLEEQALSSKQTHSKAPKKKQQEQCVVM</sequence>
<dbReference type="EMBL" id="CU329670">
    <property type="protein sequence ID" value="CAA91775.1"/>
    <property type="molecule type" value="Genomic_DNA"/>
</dbReference>
<dbReference type="PIR" id="T38337">
    <property type="entry name" value="S62555"/>
</dbReference>
<dbReference type="RefSeq" id="NP_592847.1">
    <property type="nucleotide sequence ID" value="NM_001018248.2"/>
</dbReference>
<dbReference type="SMR" id="Q09897"/>
<dbReference type="BioGRID" id="278104">
    <property type="interactions" value="8"/>
</dbReference>
<dbReference type="STRING" id="284812.Q09897"/>
<dbReference type="iPTMnet" id="Q09897"/>
<dbReference type="PaxDb" id="4896-SPAC24B11.10c.1"/>
<dbReference type="EnsemblFungi" id="SPAC24B11.10c.1">
    <property type="protein sequence ID" value="SPAC24B11.10c.1:pep"/>
    <property type="gene ID" value="SPAC24B11.10c"/>
</dbReference>
<dbReference type="GeneID" id="2541607"/>
<dbReference type="KEGG" id="spo:2541607"/>
<dbReference type="PomBase" id="SPAC24B11.10c"/>
<dbReference type="VEuPathDB" id="FungiDB:SPAC24B11.10c"/>
<dbReference type="eggNOG" id="KOG1550">
    <property type="taxonomic scope" value="Eukaryota"/>
</dbReference>
<dbReference type="HOGENOM" id="CLU_016507_0_0_1"/>
<dbReference type="InParanoid" id="Q09897"/>
<dbReference type="OMA" id="QCKLGEC"/>
<dbReference type="PRO" id="PR:Q09897"/>
<dbReference type="Proteomes" id="UP000002485">
    <property type="component" value="Chromosome I"/>
</dbReference>
<dbReference type="GO" id="GO:0032153">
    <property type="term" value="C:cell division site"/>
    <property type="evidence" value="ECO:0007005"/>
    <property type="project" value="PomBase"/>
</dbReference>
<dbReference type="GO" id="GO:0051286">
    <property type="term" value="C:cell tip"/>
    <property type="evidence" value="ECO:0007005"/>
    <property type="project" value="PomBase"/>
</dbReference>
<dbReference type="GO" id="GO:0005829">
    <property type="term" value="C:cytosol"/>
    <property type="evidence" value="ECO:0007005"/>
    <property type="project" value="PomBase"/>
</dbReference>
<dbReference type="GO" id="GO:0044732">
    <property type="term" value="C:mitotic spindle pole body"/>
    <property type="evidence" value="ECO:0007005"/>
    <property type="project" value="PomBase"/>
</dbReference>
<dbReference type="GO" id="GO:0005634">
    <property type="term" value="C:nucleus"/>
    <property type="evidence" value="ECO:0007005"/>
    <property type="project" value="PomBase"/>
</dbReference>
<dbReference type="GO" id="GO:0031505">
    <property type="term" value="P:fungal-type cell wall organization"/>
    <property type="evidence" value="ECO:0000318"/>
    <property type="project" value="GO_Central"/>
</dbReference>
<dbReference type="FunFam" id="1.25.40.10:FF:000707">
    <property type="entry name" value="Chitin synthase regulatory factor 3"/>
    <property type="match status" value="1"/>
</dbReference>
<dbReference type="Gene3D" id="1.25.40.10">
    <property type="entry name" value="Tetratricopeptide repeat domain"/>
    <property type="match status" value="2"/>
</dbReference>
<dbReference type="InterPro" id="IPR051726">
    <property type="entry name" value="Chitin_Synth_Reg"/>
</dbReference>
<dbReference type="InterPro" id="IPR006597">
    <property type="entry name" value="Sel1-like"/>
</dbReference>
<dbReference type="InterPro" id="IPR011990">
    <property type="entry name" value="TPR-like_helical_dom_sf"/>
</dbReference>
<dbReference type="PANTHER" id="PTHR46430:SF3">
    <property type="entry name" value="ACTIVATOR OF C KINASE PROTEIN 1"/>
    <property type="match status" value="1"/>
</dbReference>
<dbReference type="PANTHER" id="PTHR46430">
    <property type="entry name" value="PROTEIN SKT5-RELATED"/>
    <property type="match status" value="1"/>
</dbReference>
<dbReference type="Pfam" id="PF08238">
    <property type="entry name" value="Sel1"/>
    <property type="match status" value="7"/>
</dbReference>
<dbReference type="SMART" id="SM00671">
    <property type="entry name" value="SEL1"/>
    <property type="match status" value="7"/>
</dbReference>
<dbReference type="SUPFAM" id="SSF81901">
    <property type="entry name" value="HCP-like"/>
    <property type="match status" value="1"/>
</dbReference>
<evidence type="ECO:0000256" key="1">
    <source>
        <dbReference type="SAM" id="MobiDB-lite"/>
    </source>
</evidence>
<evidence type="ECO:0000269" key="2">
    <source>
    </source>
</evidence>
<protein>
    <recommendedName>
        <fullName>Chitin synthase regulatory factor 3</fullName>
    </recommendedName>
    <alternativeName>
        <fullName>Chs four homolog 1</fullName>
    </alternativeName>
</protein>
<name>CHR3_SCHPO</name>
<gene>
    <name type="primary">chr3</name>
    <name type="synonym">cfh1</name>
    <name type="ORF">SPAC24B11.10c</name>
</gene>
<proteinExistence type="evidence at protein level"/>
<feature type="chain" id="PRO_0000076206" description="Chitin synthase regulatory factor 3">
    <location>
        <begin position="1"/>
        <end position="932"/>
    </location>
</feature>
<feature type="repeat" description="Sel1-like 1">
    <location>
        <begin position="638"/>
        <end position="674"/>
    </location>
</feature>
<feature type="repeat" description="Sel1-like 2">
    <location>
        <begin position="675"/>
        <end position="710"/>
    </location>
</feature>
<feature type="repeat" description="Sel1-like 3">
    <location>
        <begin position="711"/>
        <end position="747"/>
    </location>
</feature>
<feature type="repeat" description="Sel1-like 4">
    <location>
        <begin position="751"/>
        <end position="788"/>
    </location>
</feature>
<feature type="repeat" description="Sel1-like 5">
    <location>
        <begin position="789"/>
        <end position="825"/>
    </location>
</feature>
<feature type="repeat" description="Sel1-like 6">
    <location>
        <begin position="826"/>
        <end position="863"/>
    </location>
</feature>
<feature type="repeat" description="Sel1-like 7">
    <location>
        <begin position="864"/>
        <end position="899"/>
    </location>
</feature>
<feature type="region of interest" description="Disordered" evidence="1">
    <location>
        <begin position="1"/>
        <end position="53"/>
    </location>
</feature>
<feature type="region of interest" description="Disordered" evidence="1">
    <location>
        <begin position="264"/>
        <end position="356"/>
    </location>
</feature>
<feature type="region of interest" description="Disordered" evidence="1">
    <location>
        <begin position="374"/>
        <end position="406"/>
    </location>
</feature>
<feature type="region of interest" description="Disordered" evidence="1">
    <location>
        <begin position="905"/>
        <end position="932"/>
    </location>
</feature>
<feature type="compositionally biased region" description="Basic and acidic residues" evidence="1">
    <location>
        <begin position="1"/>
        <end position="16"/>
    </location>
</feature>
<feature type="compositionally biased region" description="Polar residues" evidence="1">
    <location>
        <begin position="35"/>
        <end position="53"/>
    </location>
</feature>
<feature type="compositionally biased region" description="Polar residues" evidence="1">
    <location>
        <begin position="274"/>
        <end position="285"/>
    </location>
</feature>
<feature type="compositionally biased region" description="Polar residues" evidence="1">
    <location>
        <begin position="308"/>
        <end position="319"/>
    </location>
</feature>
<feature type="compositionally biased region" description="Basic and acidic residues" evidence="1">
    <location>
        <begin position="337"/>
        <end position="349"/>
    </location>
</feature>
<feature type="modified residue" description="Phosphoserine" evidence="2">
    <location>
        <position position="393"/>
    </location>
</feature>